<keyword id="KW-0030">Aminoacyl-tRNA synthetase</keyword>
<keyword id="KW-0067">ATP-binding</keyword>
<keyword id="KW-0963">Cytoplasm</keyword>
<keyword id="KW-0436">Ligase</keyword>
<keyword id="KW-0479">Metal-binding</keyword>
<keyword id="KW-0547">Nucleotide-binding</keyword>
<keyword id="KW-0648">Protein biosynthesis</keyword>
<keyword id="KW-0862">Zinc</keyword>
<sequence length="600" mass="68054">MPEHILVAVAWPYANGPRHIGHVAGFGVPADIFARYHRLRGNRVLMVSGTDEHGTPITLVADKEGTTPQAIADRYNKIIGDDLYNLGLSYDTFTRTTTANHYAVTQDIFRTLYERGYIIRQETLGAFSATTGRTLPDRYIEGTCPLCGYDEARGDQCDNCGSQLDPTDLINPRSKVDGQPPVFKPTEHFFLDLPAFAEQLHDWINRQDHWRPNVRNFSLNFLKDLKPRAITRDLEWGVPIPLPEYANRDDKKIYVWFDAVIGYLSASIEWAQNSGQPDAWREWWQNPDARHFYFMGKDNIVFHTVIWPAMLLGYGAGGQFGADPGGKYDGIPLQLPYNVVSSEFLTMEGKKFSSSRGIVIYVNDFLSRYDADALRYFLTIAGPENQDTDFTWAEFVRRNNDELVATWGNLVNRTLSNVYKNFGSVPQPGPLTPVDEQVLAEVTGGIETVGELLAAARFKAALAEAMRLAAQVNIYLSEQEPWKVIKSDHERAATIWYVALRCVDTLKIIFTPFLPFSSQRLHEYLGYNGYIAGPLTFREVTEANGRTHRVLTGDYDRWVGRWEPSVLPVGQVLRQPQPLFKKLDEKVIEEELARMQSRLG</sequence>
<protein>
    <recommendedName>
        <fullName evidence="1">Methionine--tRNA ligase</fullName>
        <ecNumber evidence="1">6.1.1.10</ecNumber>
    </recommendedName>
    <alternativeName>
        <fullName evidence="1">Methionyl-tRNA synthetase</fullName>
        <shortName evidence="1">MetRS</shortName>
    </alternativeName>
</protein>
<proteinExistence type="inferred from homology"/>
<reference key="1">
    <citation type="submission" date="2008-12" db="EMBL/GenBank/DDBJ databases">
        <title>Complete sequence of Chloroflexus aggregans DSM 9485.</title>
        <authorList>
            <consortium name="US DOE Joint Genome Institute"/>
            <person name="Lucas S."/>
            <person name="Copeland A."/>
            <person name="Lapidus A."/>
            <person name="Glavina del Rio T."/>
            <person name="Dalin E."/>
            <person name="Tice H."/>
            <person name="Pitluck S."/>
            <person name="Foster B."/>
            <person name="Larimer F."/>
            <person name="Land M."/>
            <person name="Hauser L."/>
            <person name="Kyrpides N."/>
            <person name="Mikhailova N."/>
            <person name="Bryant D.A."/>
            <person name="Richardson P."/>
        </authorList>
    </citation>
    <scope>NUCLEOTIDE SEQUENCE [LARGE SCALE GENOMIC DNA]</scope>
    <source>
        <strain>MD-66 / DSM 9485</strain>
    </source>
</reference>
<organism>
    <name type="scientific">Chloroflexus aggregans (strain MD-66 / DSM 9485)</name>
    <dbReference type="NCBI Taxonomy" id="326427"/>
    <lineage>
        <taxon>Bacteria</taxon>
        <taxon>Bacillati</taxon>
        <taxon>Chloroflexota</taxon>
        <taxon>Chloroflexia</taxon>
        <taxon>Chloroflexales</taxon>
        <taxon>Chloroflexineae</taxon>
        <taxon>Chloroflexaceae</taxon>
        <taxon>Chloroflexus</taxon>
    </lineage>
</organism>
<gene>
    <name evidence="1" type="primary">metG</name>
    <name type="ordered locus">Cagg_0976</name>
</gene>
<evidence type="ECO:0000255" key="1">
    <source>
        <dbReference type="HAMAP-Rule" id="MF_00098"/>
    </source>
</evidence>
<name>SYM_CHLAD</name>
<feature type="chain" id="PRO_1000118728" description="Methionine--tRNA ligase">
    <location>
        <begin position="1"/>
        <end position="600"/>
    </location>
</feature>
<feature type="short sequence motif" description="'HIGH' region">
    <location>
        <begin position="12"/>
        <end position="22"/>
    </location>
</feature>
<feature type="short sequence motif" description="'KMSKS' region">
    <location>
        <begin position="351"/>
        <end position="355"/>
    </location>
</feature>
<feature type="binding site" evidence="1">
    <location>
        <position position="144"/>
    </location>
    <ligand>
        <name>Zn(2+)</name>
        <dbReference type="ChEBI" id="CHEBI:29105"/>
    </ligand>
</feature>
<feature type="binding site" evidence="1">
    <location>
        <position position="147"/>
    </location>
    <ligand>
        <name>Zn(2+)</name>
        <dbReference type="ChEBI" id="CHEBI:29105"/>
    </ligand>
</feature>
<feature type="binding site" evidence="1">
    <location>
        <position position="157"/>
    </location>
    <ligand>
        <name>Zn(2+)</name>
        <dbReference type="ChEBI" id="CHEBI:29105"/>
    </ligand>
</feature>
<feature type="binding site" evidence="1">
    <location>
        <position position="160"/>
    </location>
    <ligand>
        <name>Zn(2+)</name>
        <dbReference type="ChEBI" id="CHEBI:29105"/>
    </ligand>
</feature>
<feature type="binding site" evidence="1">
    <location>
        <position position="354"/>
    </location>
    <ligand>
        <name>ATP</name>
        <dbReference type="ChEBI" id="CHEBI:30616"/>
    </ligand>
</feature>
<accession>B8G6F7</accession>
<comment type="function">
    <text evidence="1">Is required not only for elongation of protein synthesis but also for the initiation of all mRNA translation through initiator tRNA(fMet) aminoacylation.</text>
</comment>
<comment type="catalytic activity">
    <reaction evidence="1">
        <text>tRNA(Met) + L-methionine + ATP = L-methionyl-tRNA(Met) + AMP + diphosphate</text>
        <dbReference type="Rhea" id="RHEA:13481"/>
        <dbReference type="Rhea" id="RHEA-COMP:9667"/>
        <dbReference type="Rhea" id="RHEA-COMP:9698"/>
        <dbReference type="ChEBI" id="CHEBI:30616"/>
        <dbReference type="ChEBI" id="CHEBI:33019"/>
        <dbReference type="ChEBI" id="CHEBI:57844"/>
        <dbReference type="ChEBI" id="CHEBI:78442"/>
        <dbReference type="ChEBI" id="CHEBI:78530"/>
        <dbReference type="ChEBI" id="CHEBI:456215"/>
        <dbReference type="EC" id="6.1.1.10"/>
    </reaction>
</comment>
<comment type="cofactor">
    <cofactor evidence="1">
        <name>Zn(2+)</name>
        <dbReference type="ChEBI" id="CHEBI:29105"/>
    </cofactor>
    <text evidence="1">Binds 1 zinc ion per subunit.</text>
</comment>
<comment type="subunit">
    <text evidence="1">Monomer.</text>
</comment>
<comment type="subcellular location">
    <subcellularLocation>
        <location evidence="1">Cytoplasm</location>
    </subcellularLocation>
</comment>
<comment type="similarity">
    <text evidence="1">Belongs to the class-I aminoacyl-tRNA synthetase family. MetG type 1 subfamily.</text>
</comment>
<dbReference type="EC" id="6.1.1.10" evidence="1"/>
<dbReference type="EMBL" id="CP001337">
    <property type="protein sequence ID" value="ACL23894.1"/>
    <property type="molecule type" value="Genomic_DNA"/>
</dbReference>
<dbReference type="RefSeq" id="WP_012616260.1">
    <property type="nucleotide sequence ID" value="NC_011831.1"/>
</dbReference>
<dbReference type="SMR" id="B8G6F7"/>
<dbReference type="STRING" id="326427.Cagg_0976"/>
<dbReference type="KEGG" id="cag:Cagg_0976"/>
<dbReference type="eggNOG" id="COG0143">
    <property type="taxonomic scope" value="Bacteria"/>
</dbReference>
<dbReference type="HOGENOM" id="CLU_009710_1_2_0"/>
<dbReference type="OrthoDB" id="9810191at2"/>
<dbReference type="Proteomes" id="UP000002508">
    <property type="component" value="Chromosome"/>
</dbReference>
<dbReference type="GO" id="GO:0005829">
    <property type="term" value="C:cytosol"/>
    <property type="evidence" value="ECO:0007669"/>
    <property type="project" value="TreeGrafter"/>
</dbReference>
<dbReference type="GO" id="GO:0005524">
    <property type="term" value="F:ATP binding"/>
    <property type="evidence" value="ECO:0007669"/>
    <property type="project" value="UniProtKB-UniRule"/>
</dbReference>
<dbReference type="GO" id="GO:0046872">
    <property type="term" value="F:metal ion binding"/>
    <property type="evidence" value="ECO:0007669"/>
    <property type="project" value="UniProtKB-KW"/>
</dbReference>
<dbReference type="GO" id="GO:0004825">
    <property type="term" value="F:methionine-tRNA ligase activity"/>
    <property type="evidence" value="ECO:0007669"/>
    <property type="project" value="UniProtKB-UniRule"/>
</dbReference>
<dbReference type="GO" id="GO:0006431">
    <property type="term" value="P:methionyl-tRNA aminoacylation"/>
    <property type="evidence" value="ECO:0007669"/>
    <property type="project" value="UniProtKB-UniRule"/>
</dbReference>
<dbReference type="CDD" id="cd07957">
    <property type="entry name" value="Anticodon_Ia_Met"/>
    <property type="match status" value="1"/>
</dbReference>
<dbReference type="CDD" id="cd00814">
    <property type="entry name" value="MetRS_core"/>
    <property type="match status" value="1"/>
</dbReference>
<dbReference type="FunFam" id="2.20.28.20:FF:000001">
    <property type="entry name" value="Methionine--tRNA ligase"/>
    <property type="match status" value="1"/>
</dbReference>
<dbReference type="Gene3D" id="3.40.50.620">
    <property type="entry name" value="HUPs"/>
    <property type="match status" value="1"/>
</dbReference>
<dbReference type="Gene3D" id="1.10.730.10">
    <property type="entry name" value="Isoleucyl-tRNA Synthetase, Domain 1"/>
    <property type="match status" value="1"/>
</dbReference>
<dbReference type="Gene3D" id="2.20.28.20">
    <property type="entry name" value="Methionyl-tRNA synthetase, Zn-domain"/>
    <property type="match status" value="1"/>
</dbReference>
<dbReference type="HAMAP" id="MF_00098">
    <property type="entry name" value="Met_tRNA_synth_type1"/>
    <property type="match status" value="1"/>
</dbReference>
<dbReference type="InterPro" id="IPR041872">
    <property type="entry name" value="Anticodon_Met"/>
</dbReference>
<dbReference type="InterPro" id="IPR023458">
    <property type="entry name" value="Met-tRNA_ligase_1"/>
</dbReference>
<dbReference type="InterPro" id="IPR014758">
    <property type="entry name" value="Met-tRNA_synth"/>
</dbReference>
<dbReference type="InterPro" id="IPR015413">
    <property type="entry name" value="Methionyl/Leucyl_tRNA_Synth"/>
</dbReference>
<dbReference type="InterPro" id="IPR033911">
    <property type="entry name" value="MetRS_core"/>
</dbReference>
<dbReference type="InterPro" id="IPR029038">
    <property type="entry name" value="MetRS_Zn"/>
</dbReference>
<dbReference type="InterPro" id="IPR014729">
    <property type="entry name" value="Rossmann-like_a/b/a_fold"/>
</dbReference>
<dbReference type="InterPro" id="IPR009080">
    <property type="entry name" value="tRNAsynth_Ia_anticodon-bd"/>
</dbReference>
<dbReference type="NCBIfam" id="TIGR00398">
    <property type="entry name" value="metG"/>
    <property type="match status" value="1"/>
</dbReference>
<dbReference type="PANTHER" id="PTHR45765">
    <property type="entry name" value="METHIONINE--TRNA LIGASE"/>
    <property type="match status" value="1"/>
</dbReference>
<dbReference type="PANTHER" id="PTHR45765:SF1">
    <property type="entry name" value="METHIONINE--TRNA LIGASE, CYTOPLASMIC"/>
    <property type="match status" value="1"/>
</dbReference>
<dbReference type="Pfam" id="PF19303">
    <property type="entry name" value="Anticodon_3"/>
    <property type="match status" value="1"/>
</dbReference>
<dbReference type="Pfam" id="PF09334">
    <property type="entry name" value="tRNA-synt_1g"/>
    <property type="match status" value="1"/>
</dbReference>
<dbReference type="PRINTS" id="PR01041">
    <property type="entry name" value="TRNASYNTHMET"/>
</dbReference>
<dbReference type="SUPFAM" id="SSF47323">
    <property type="entry name" value="Anticodon-binding domain of a subclass of class I aminoacyl-tRNA synthetases"/>
    <property type="match status" value="1"/>
</dbReference>
<dbReference type="SUPFAM" id="SSF57770">
    <property type="entry name" value="Methionyl-tRNA synthetase (MetRS), Zn-domain"/>
    <property type="match status" value="1"/>
</dbReference>
<dbReference type="SUPFAM" id="SSF52374">
    <property type="entry name" value="Nucleotidylyl transferase"/>
    <property type="match status" value="1"/>
</dbReference>